<sequence>MESIVDKQAVKHFLLQLQDKICQQLEATDGQAQFIEDAWQREPGEKLGGGGRTRVMREGAVFEQGGVNFSHVFGEQMPASATAHRPELAGRRFEAMGVSLVMHPKNPYVPTSHANVRFFIAEKEGEAPIWWFGGGFDLTPFYPFVEDGQHWHQTAKNICAPFGSEIYNEHKAWCDRYFYLPHRNETRGIGGLFFDDLNEWSFEQCFAYMQAVGEGYTQAYVPIVEKRKNTPFTERERQFQLYRRGRYVEFNLVLDRGTLFGLQTGGRTESILMSMPPLARWEYAYQPQAGTPEAKLSEFLVPREW</sequence>
<gene>
    <name evidence="1" type="primary">hemF</name>
    <name type="ordered locus">VC_0055</name>
</gene>
<reference key="1">
    <citation type="journal article" date="2000" name="Nature">
        <title>DNA sequence of both chromosomes of the cholera pathogen Vibrio cholerae.</title>
        <authorList>
            <person name="Heidelberg J.F."/>
            <person name="Eisen J.A."/>
            <person name="Nelson W.C."/>
            <person name="Clayton R.A."/>
            <person name="Gwinn M.L."/>
            <person name="Dodson R.J."/>
            <person name="Haft D.H."/>
            <person name="Hickey E.K."/>
            <person name="Peterson J.D."/>
            <person name="Umayam L.A."/>
            <person name="Gill S.R."/>
            <person name="Nelson K.E."/>
            <person name="Read T.D."/>
            <person name="Tettelin H."/>
            <person name="Richardson D.L."/>
            <person name="Ermolaeva M.D."/>
            <person name="Vamathevan J.J."/>
            <person name="Bass S."/>
            <person name="Qin H."/>
            <person name="Dragoi I."/>
            <person name="Sellers P."/>
            <person name="McDonald L.A."/>
            <person name="Utterback T.R."/>
            <person name="Fleischmann R.D."/>
            <person name="Nierman W.C."/>
            <person name="White O."/>
            <person name="Salzberg S.L."/>
            <person name="Smith H.O."/>
            <person name="Colwell R.R."/>
            <person name="Mekalanos J.J."/>
            <person name="Venter J.C."/>
            <person name="Fraser C.M."/>
        </authorList>
    </citation>
    <scope>NUCLEOTIDE SEQUENCE [LARGE SCALE GENOMIC DNA]</scope>
    <source>
        <strain>ATCC 39315 / El Tor Inaba N16961</strain>
    </source>
</reference>
<comment type="function">
    <text evidence="1">Involved in the heme biosynthesis. Catalyzes the aerobic oxidative decarboxylation of propionate groups of rings A and B of coproporphyrinogen-III to yield the vinyl groups in protoporphyrinogen-IX.</text>
</comment>
<comment type="catalytic activity">
    <reaction evidence="1">
        <text>coproporphyrinogen III + O2 + 2 H(+) = protoporphyrinogen IX + 2 CO2 + 2 H2O</text>
        <dbReference type="Rhea" id="RHEA:18257"/>
        <dbReference type="ChEBI" id="CHEBI:15377"/>
        <dbReference type="ChEBI" id="CHEBI:15378"/>
        <dbReference type="ChEBI" id="CHEBI:15379"/>
        <dbReference type="ChEBI" id="CHEBI:16526"/>
        <dbReference type="ChEBI" id="CHEBI:57307"/>
        <dbReference type="ChEBI" id="CHEBI:57309"/>
        <dbReference type="EC" id="1.3.3.3"/>
    </reaction>
</comment>
<comment type="cofactor">
    <cofactor evidence="1">
        <name>a divalent metal cation</name>
        <dbReference type="ChEBI" id="CHEBI:60240"/>
    </cofactor>
</comment>
<comment type="pathway">
    <text evidence="1">Porphyrin-containing compound metabolism; protoporphyrin-IX biosynthesis; protoporphyrinogen-IX from coproporphyrinogen-III (O2 route): step 1/1.</text>
</comment>
<comment type="subunit">
    <text evidence="1">Homodimer.</text>
</comment>
<comment type="subcellular location">
    <subcellularLocation>
        <location evidence="1">Cytoplasm</location>
    </subcellularLocation>
</comment>
<comment type="similarity">
    <text evidence="1">Belongs to the aerobic coproporphyrinogen-III oxidase family.</text>
</comment>
<dbReference type="EC" id="1.3.3.3" evidence="1"/>
<dbReference type="EMBL" id="AE003852">
    <property type="protein sequence ID" value="AAF93233.1"/>
    <property type="molecule type" value="Genomic_DNA"/>
</dbReference>
<dbReference type="PIR" id="F82370">
    <property type="entry name" value="F82370"/>
</dbReference>
<dbReference type="RefSeq" id="NP_229714.1">
    <property type="nucleotide sequence ID" value="NC_002505.1"/>
</dbReference>
<dbReference type="RefSeq" id="WP_000443976.1">
    <property type="nucleotide sequence ID" value="NZ_LT906614.1"/>
</dbReference>
<dbReference type="SMR" id="Q9KVT4"/>
<dbReference type="STRING" id="243277.VC_0055"/>
<dbReference type="DNASU" id="2614439"/>
<dbReference type="EnsemblBacteria" id="AAF93233">
    <property type="protein sequence ID" value="AAF93233"/>
    <property type="gene ID" value="VC_0055"/>
</dbReference>
<dbReference type="KEGG" id="vch:VC_0055"/>
<dbReference type="PATRIC" id="fig|243277.26.peg.53"/>
<dbReference type="eggNOG" id="COG0408">
    <property type="taxonomic scope" value="Bacteria"/>
</dbReference>
<dbReference type="HOGENOM" id="CLU_026169_0_1_6"/>
<dbReference type="UniPathway" id="UPA00251">
    <property type="reaction ID" value="UER00322"/>
</dbReference>
<dbReference type="Proteomes" id="UP000000584">
    <property type="component" value="Chromosome 1"/>
</dbReference>
<dbReference type="GO" id="GO:0005737">
    <property type="term" value="C:cytoplasm"/>
    <property type="evidence" value="ECO:0000318"/>
    <property type="project" value="GO_Central"/>
</dbReference>
<dbReference type="GO" id="GO:0004109">
    <property type="term" value="F:coproporphyrinogen oxidase activity"/>
    <property type="evidence" value="ECO:0000318"/>
    <property type="project" value="GO_Central"/>
</dbReference>
<dbReference type="GO" id="GO:0046872">
    <property type="term" value="F:metal ion binding"/>
    <property type="evidence" value="ECO:0007669"/>
    <property type="project" value="UniProtKB-KW"/>
</dbReference>
<dbReference type="GO" id="GO:0042803">
    <property type="term" value="F:protein homodimerization activity"/>
    <property type="evidence" value="ECO:0000250"/>
    <property type="project" value="UniProtKB"/>
</dbReference>
<dbReference type="GO" id="GO:0006782">
    <property type="term" value="P:protoporphyrinogen IX biosynthetic process"/>
    <property type="evidence" value="ECO:0000318"/>
    <property type="project" value="GO_Central"/>
</dbReference>
<dbReference type="FunFam" id="3.40.1500.10:FF:000001">
    <property type="entry name" value="Oxygen-dependent coproporphyrinogen-III oxidase"/>
    <property type="match status" value="1"/>
</dbReference>
<dbReference type="Gene3D" id="3.40.1500.10">
    <property type="entry name" value="Coproporphyrinogen III oxidase, aerobic"/>
    <property type="match status" value="1"/>
</dbReference>
<dbReference type="HAMAP" id="MF_00333">
    <property type="entry name" value="Coprogen_oxidas"/>
    <property type="match status" value="1"/>
</dbReference>
<dbReference type="InterPro" id="IPR001260">
    <property type="entry name" value="Coprogen_oxidase_aer"/>
</dbReference>
<dbReference type="InterPro" id="IPR036406">
    <property type="entry name" value="Coprogen_oxidase_aer_sf"/>
</dbReference>
<dbReference type="InterPro" id="IPR018375">
    <property type="entry name" value="Coprogen_oxidase_CS"/>
</dbReference>
<dbReference type="NCBIfam" id="NF003727">
    <property type="entry name" value="PRK05330.1"/>
    <property type="match status" value="1"/>
</dbReference>
<dbReference type="PANTHER" id="PTHR10755">
    <property type="entry name" value="COPROPORPHYRINOGEN III OXIDASE, MITOCHONDRIAL"/>
    <property type="match status" value="1"/>
</dbReference>
<dbReference type="PANTHER" id="PTHR10755:SF0">
    <property type="entry name" value="OXYGEN-DEPENDENT COPROPORPHYRINOGEN-III OXIDASE, MITOCHONDRIAL"/>
    <property type="match status" value="1"/>
</dbReference>
<dbReference type="Pfam" id="PF01218">
    <property type="entry name" value="Coprogen_oxidas"/>
    <property type="match status" value="1"/>
</dbReference>
<dbReference type="PIRSF" id="PIRSF000166">
    <property type="entry name" value="Coproporphyri_ox"/>
    <property type="match status" value="1"/>
</dbReference>
<dbReference type="PRINTS" id="PR00073">
    <property type="entry name" value="COPRGNOXDASE"/>
</dbReference>
<dbReference type="SUPFAM" id="SSF102886">
    <property type="entry name" value="Coproporphyrinogen III oxidase"/>
    <property type="match status" value="1"/>
</dbReference>
<dbReference type="PROSITE" id="PS01021">
    <property type="entry name" value="COPROGEN_OXIDASE"/>
    <property type="match status" value="1"/>
</dbReference>
<feature type="chain" id="PRO_0000109926" description="Oxygen-dependent coproporphyrinogen-III oxidase">
    <location>
        <begin position="1"/>
        <end position="305"/>
    </location>
</feature>
<feature type="region of interest" description="Important for dimerization" evidence="1">
    <location>
        <begin position="247"/>
        <end position="282"/>
    </location>
</feature>
<feature type="active site" description="Proton donor" evidence="1">
    <location>
        <position position="113"/>
    </location>
</feature>
<feature type="binding site" evidence="1">
    <location>
        <position position="99"/>
    </location>
    <ligand>
        <name>substrate</name>
    </ligand>
</feature>
<feature type="binding site" evidence="1">
    <location>
        <position position="103"/>
    </location>
    <ligand>
        <name>a divalent metal cation</name>
        <dbReference type="ChEBI" id="CHEBI:60240"/>
    </ligand>
</feature>
<feature type="binding site" evidence="1">
    <location>
        <position position="113"/>
    </location>
    <ligand>
        <name>a divalent metal cation</name>
        <dbReference type="ChEBI" id="CHEBI:60240"/>
    </ligand>
</feature>
<feature type="binding site" evidence="1">
    <location>
        <begin position="115"/>
        <end position="117"/>
    </location>
    <ligand>
        <name>substrate</name>
    </ligand>
</feature>
<feature type="binding site" evidence="1">
    <location>
        <position position="152"/>
    </location>
    <ligand>
        <name>a divalent metal cation</name>
        <dbReference type="ChEBI" id="CHEBI:60240"/>
    </ligand>
</feature>
<feature type="binding site" evidence="1">
    <location>
        <position position="182"/>
    </location>
    <ligand>
        <name>a divalent metal cation</name>
        <dbReference type="ChEBI" id="CHEBI:60240"/>
    </ligand>
</feature>
<feature type="binding site" evidence="1">
    <location>
        <begin position="265"/>
        <end position="267"/>
    </location>
    <ligand>
        <name>substrate</name>
    </ligand>
</feature>
<feature type="site" description="Important for dimerization" evidence="1">
    <location>
        <position position="182"/>
    </location>
</feature>
<name>HEM6_VIBCH</name>
<accession>Q9KVT4</accession>
<keyword id="KW-0963">Cytoplasm</keyword>
<keyword id="KW-0350">Heme biosynthesis</keyword>
<keyword id="KW-0479">Metal-binding</keyword>
<keyword id="KW-0560">Oxidoreductase</keyword>
<keyword id="KW-0627">Porphyrin biosynthesis</keyword>
<keyword id="KW-1185">Reference proteome</keyword>
<proteinExistence type="inferred from homology"/>
<protein>
    <recommendedName>
        <fullName evidence="1">Oxygen-dependent coproporphyrinogen-III oxidase</fullName>
        <shortName evidence="1">CPO</shortName>
        <shortName evidence="1">Coprogen oxidase</shortName>
        <shortName evidence="1">Coproporphyrinogenase</shortName>
        <ecNumber evidence="1">1.3.3.3</ecNumber>
    </recommendedName>
</protein>
<evidence type="ECO:0000255" key="1">
    <source>
        <dbReference type="HAMAP-Rule" id="MF_00333"/>
    </source>
</evidence>
<organism>
    <name type="scientific">Vibrio cholerae serotype O1 (strain ATCC 39315 / El Tor Inaba N16961)</name>
    <dbReference type="NCBI Taxonomy" id="243277"/>
    <lineage>
        <taxon>Bacteria</taxon>
        <taxon>Pseudomonadati</taxon>
        <taxon>Pseudomonadota</taxon>
        <taxon>Gammaproteobacteria</taxon>
        <taxon>Vibrionales</taxon>
        <taxon>Vibrionaceae</taxon>
        <taxon>Vibrio</taxon>
    </lineage>
</organism>